<reference key="1">
    <citation type="journal article" date="2000" name="Nature">
        <title>The genome sequence of the food-borne pathogen Campylobacter jejuni reveals hypervariable sequences.</title>
        <authorList>
            <person name="Parkhill J."/>
            <person name="Wren B.W."/>
            <person name="Mungall K.L."/>
            <person name="Ketley J.M."/>
            <person name="Churcher C.M."/>
            <person name="Basham D."/>
            <person name="Chillingworth T."/>
            <person name="Davies R.M."/>
            <person name="Feltwell T."/>
            <person name="Holroyd S."/>
            <person name="Jagels K."/>
            <person name="Karlyshev A.V."/>
            <person name="Moule S."/>
            <person name="Pallen M.J."/>
            <person name="Penn C.W."/>
            <person name="Quail M.A."/>
            <person name="Rajandream M.A."/>
            <person name="Rutherford K.M."/>
            <person name="van Vliet A.H.M."/>
            <person name="Whitehead S."/>
            <person name="Barrell B.G."/>
        </authorList>
    </citation>
    <scope>NUCLEOTIDE SEQUENCE [LARGE SCALE GENOMIC DNA]</scope>
    <source>
        <strain>ATCC 700819 / NCTC 11168</strain>
    </source>
</reference>
<dbReference type="EC" id="6.1.1.16"/>
<dbReference type="EMBL" id="AL111168">
    <property type="protein sequence ID" value="CAL34930.1"/>
    <property type="molecule type" value="Genomic_DNA"/>
</dbReference>
<dbReference type="PIR" id="B81352">
    <property type="entry name" value="B81352"/>
</dbReference>
<dbReference type="RefSeq" id="WP_002852611.1">
    <property type="nucleotide sequence ID" value="NZ_SZUC01000001.1"/>
</dbReference>
<dbReference type="RefSeq" id="YP_002344209.1">
    <property type="nucleotide sequence ID" value="NC_002163.1"/>
</dbReference>
<dbReference type="SMR" id="Q9PPB8"/>
<dbReference type="IntAct" id="Q9PPB8">
    <property type="interactions" value="1"/>
</dbReference>
<dbReference type="STRING" id="192222.Cj0802"/>
<dbReference type="PaxDb" id="192222-Cj0802"/>
<dbReference type="EnsemblBacteria" id="CAL34930">
    <property type="protein sequence ID" value="CAL34930"/>
    <property type="gene ID" value="Cj0802"/>
</dbReference>
<dbReference type="GeneID" id="905105"/>
<dbReference type="KEGG" id="cje:Cj0802"/>
<dbReference type="PATRIC" id="fig|192222.6.peg.790"/>
<dbReference type="eggNOG" id="COG0215">
    <property type="taxonomic scope" value="Bacteria"/>
</dbReference>
<dbReference type="HOGENOM" id="CLU_013528_0_1_7"/>
<dbReference type="OrthoDB" id="9815130at2"/>
<dbReference type="Proteomes" id="UP000000799">
    <property type="component" value="Chromosome"/>
</dbReference>
<dbReference type="GO" id="GO:0005829">
    <property type="term" value="C:cytosol"/>
    <property type="evidence" value="ECO:0007669"/>
    <property type="project" value="TreeGrafter"/>
</dbReference>
<dbReference type="GO" id="GO:0005524">
    <property type="term" value="F:ATP binding"/>
    <property type="evidence" value="ECO:0007669"/>
    <property type="project" value="UniProtKB-UniRule"/>
</dbReference>
<dbReference type="GO" id="GO:0004817">
    <property type="term" value="F:cysteine-tRNA ligase activity"/>
    <property type="evidence" value="ECO:0007669"/>
    <property type="project" value="UniProtKB-UniRule"/>
</dbReference>
<dbReference type="GO" id="GO:0008270">
    <property type="term" value="F:zinc ion binding"/>
    <property type="evidence" value="ECO:0007669"/>
    <property type="project" value="UniProtKB-UniRule"/>
</dbReference>
<dbReference type="GO" id="GO:0006423">
    <property type="term" value="P:cysteinyl-tRNA aminoacylation"/>
    <property type="evidence" value="ECO:0007669"/>
    <property type="project" value="UniProtKB-UniRule"/>
</dbReference>
<dbReference type="CDD" id="cd00672">
    <property type="entry name" value="CysRS_core"/>
    <property type="match status" value="1"/>
</dbReference>
<dbReference type="Gene3D" id="1.20.120.1910">
    <property type="entry name" value="Cysteine-tRNA ligase, C-terminal anti-codon recognition domain"/>
    <property type="match status" value="1"/>
</dbReference>
<dbReference type="Gene3D" id="3.40.50.620">
    <property type="entry name" value="HUPs"/>
    <property type="match status" value="1"/>
</dbReference>
<dbReference type="HAMAP" id="MF_00041">
    <property type="entry name" value="Cys_tRNA_synth"/>
    <property type="match status" value="1"/>
</dbReference>
<dbReference type="InterPro" id="IPR015803">
    <property type="entry name" value="Cys-tRNA-ligase"/>
</dbReference>
<dbReference type="InterPro" id="IPR015273">
    <property type="entry name" value="Cys-tRNA-synt_Ia_DALR"/>
</dbReference>
<dbReference type="InterPro" id="IPR024909">
    <property type="entry name" value="Cys-tRNA/MSH_ligase"/>
</dbReference>
<dbReference type="InterPro" id="IPR014729">
    <property type="entry name" value="Rossmann-like_a/b/a_fold"/>
</dbReference>
<dbReference type="InterPro" id="IPR032678">
    <property type="entry name" value="tRNA-synt_1_cat_dom"/>
</dbReference>
<dbReference type="InterPro" id="IPR009080">
    <property type="entry name" value="tRNAsynth_Ia_anticodon-bd"/>
</dbReference>
<dbReference type="NCBIfam" id="TIGR00435">
    <property type="entry name" value="cysS"/>
    <property type="match status" value="1"/>
</dbReference>
<dbReference type="PANTHER" id="PTHR10890:SF3">
    <property type="entry name" value="CYSTEINE--TRNA LIGASE, CYTOPLASMIC"/>
    <property type="match status" value="1"/>
</dbReference>
<dbReference type="PANTHER" id="PTHR10890">
    <property type="entry name" value="CYSTEINYL-TRNA SYNTHETASE"/>
    <property type="match status" value="1"/>
</dbReference>
<dbReference type="Pfam" id="PF09190">
    <property type="entry name" value="DALR_2"/>
    <property type="match status" value="1"/>
</dbReference>
<dbReference type="Pfam" id="PF01406">
    <property type="entry name" value="tRNA-synt_1e"/>
    <property type="match status" value="1"/>
</dbReference>
<dbReference type="PRINTS" id="PR00983">
    <property type="entry name" value="TRNASYNTHCYS"/>
</dbReference>
<dbReference type="SMART" id="SM00840">
    <property type="entry name" value="DALR_2"/>
    <property type="match status" value="1"/>
</dbReference>
<dbReference type="SUPFAM" id="SSF47323">
    <property type="entry name" value="Anticodon-binding domain of a subclass of class I aminoacyl-tRNA synthetases"/>
    <property type="match status" value="1"/>
</dbReference>
<dbReference type="SUPFAM" id="SSF52374">
    <property type="entry name" value="Nucleotidylyl transferase"/>
    <property type="match status" value="1"/>
</dbReference>
<keyword id="KW-0030">Aminoacyl-tRNA synthetase</keyword>
<keyword id="KW-0067">ATP-binding</keyword>
<keyword id="KW-0963">Cytoplasm</keyword>
<keyword id="KW-0436">Ligase</keyword>
<keyword id="KW-0479">Metal-binding</keyword>
<keyword id="KW-0547">Nucleotide-binding</keyword>
<keyword id="KW-0648">Protein biosynthesis</keyword>
<keyword id="KW-1185">Reference proteome</keyword>
<keyword id="KW-0862">Zinc</keyword>
<name>SYC_CAMJE</name>
<feature type="chain" id="PRO_0000159371" description="Cysteine--tRNA ligase">
    <location>
        <begin position="1"/>
        <end position="462"/>
    </location>
</feature>
<feature type="short sequence motif" description="'HIGH' region">
    <location>
        <begin position="26"/>
        <end position="36"/>
    </location>
</feature>
<feature type="short sequence motif" description="'KMSKS' region">
    <location>
        <begin position="256"/>
        <end position="260"/>
    </location>
</feature>
<feature type="binding site" evidence="1">
    <location>
        <position position="24"/>
    </location>
    <ligand>
        <name>Zn(2+)</name>
        <dbReference type="ChEBI" id="CHEBI:29105"/>
    </ligand>
</feature>
<feature type="binding site" evidence="1">
    <location>
        <position position="199"/>
    </location>
    <ligand>
        <name>Zn(2+)</name>
        <dbReference type="ChEBI" id="CHEBI:29105"/>
    </ligand>
</feature>
<feature type="binding site" evidence="1">
    <location>
        <position position="224"/>
    </location>
    <ligand>
        <name>Zn(2+)</name>
        <dbReference type="ChEBI" id="CHEBI:29105"/>
    </ligand>
</feature>
<feature type="binding site" evidence="1">
    <location>
        <position position="228"/>
    </location>
    <ligand>
        <name>Zn(2+)</name>
        <dbReference type="ChEBI" id="CHEBI:29105"/>
    </ligand>
</feature>
<feature type="binding site" evidence="1">
    <location>
        <position position="259"/>
    </location>
    <ligand>
        <name>ATP</name>
        <dbReference type="ChEBI" id="CHEBI:30616"/>
    </ligand>
</feature>
<evidence type="ECO:0000250" key="1"/>
<evidence type="ECO:0000305" key="2"/>
<protein>
    <recommendedName>
        <fullName>Cysteine--tRNA ligase</fullName>
        <ecNumber>6.1.1.16</ecNumber>
    </recommendedName>
    <alternativeName>
        <fullName>Cysteinyl-tRNA synthetase</fullName>
        <shortName>CysRS</shortName>
    </alternativeName>
</protein>
<accession>Q9PPB8</accession>
<accession>Q0PA88</accession>
<comment type="catalytic activity">
    <reaction>
        <text>tRNA(Cys) + L-cysteine + ATP = L-cysteinyl-tRNA(Cys) + AMP + diphosphate</text>
        <dbReference type="Rhea" id="RHEA:17773"/>
        <dbReference type="Rhea" id="RHEA-COMP:9661"/>
        <dbReference type="Rhea" id="RHEA-COMP:9679"/>
        <dbReference type="ChEBI" id="CHEBI:30616"/>
        <dbReference type="ChEBI" id="CHEBI:33019"/>
        <dbReference type="ChEBI" id="CHEBI:35235"/>
        <dbReference type="ChEBI" id="CHEBI:78442"/>
        <dbReference type="ChEBI" id="CHEBI:78517"/>
        <dbReference type="ChEBI" id="CHEBI:456215"/>
        <dbReference type="EC" id="6.1.1.16"/>
    </reaction>
</comment>
<comment type="cofactor">
    <cofactor evidence="1">
        <name>Zn(2+)</name>
        <dbReference type="ChEBI" id="CHEBI:29105"/>
    </cofactor>
    <text evidence="1">Binds 1 zinc ion per subunit.</text>
</comment>
<comment type="subunit">
    <text evidence="1">Monomer.</text>
</comment>
<comment type="subcellular location">
    <subcellularLocation>
        <location evidence="1">Cytoplasm</location>
    </subcellularLocation>
</comment>
<comment type="similarity">
    <text evidence="2">Belongs to the class-I aminoacyl-tRNA synthetase family.</text>
</comment>
<gene>
    <name type="primary">cysS</name>
    <name type="ordered locus">Cj0802</name>
</gene>
<sequence length="462" mass="53513">MRLLDSVTKEKIKLDKKDISIYLCGPTVYDDAHLGHARSSVCFDLLRRVLLAQGNRVKFARNYTDIDDKILKKMAQSGQTLEEITEFYIKSYEEDMRVLNVLDPDFKPRATHYITAMLDLIKKLAKDGFVYTLEDGIYFDTSKDEKYLSLSNRNLEENISRLSNEVQKRNESDFVLWKFDENFYESEFGKGRPGWHTECVAMIDSIFENTLDIHAGGIDLLFPHHENEAAQCRCGCKRKLANIWLHNGFVKIDGEKMSKSLNNSFFIKDALKEFMGEALRFYLLSSHYRSHFNYSLSDLENAKKRLDKFYRLKKRLDLGEISDFDVLNDIGIKSEIAKQILEILNDDLNVSKALALLDDFISSANLELDKESKNKILKQNIKEALSELAKIFGFGFMDATLYFQWGVSKEEREEIEKLILERTEAKKNKDFNTADAIREQLNSKKITLLDTPNGTIWEKINA</sequence>
<proteinExistence type="inferred from homology"/>
<organism>
    <name type="scientific">Campylobacter jejuni subsp. jejuni serotype O:2 (strain ATCC 700819 / NCTC 11168)</name>
    <dbReference type="NCBI Taxonomy" id="192222"/>
    <lineage>
        <taxon>Bacteria</taxon>
        <taxon>Pseudomonadati</taxon>
        <taxon>Campylobacterota</taxon>
        <taxon>Epsilonproteobacteria</taxon>
        <taxon>Campylobacterales</taxon>
        <taxon>Campylobacteraceae</taxon>
        <taxon>Campylobacter</taxon>
    </lineage>
</organism>